<reference key="1">
    <citation type="submission" date="1995-10" db="EMBL/GenBank/DDBJ databases">
        <authorList>
            <person name="de Bettignies G."/>
            <person name="Bergez-Aullo P."/>
            <person name="Barthe C."/>
            <person name="Louvet O."/>
            <person name="Peypouquet M.-F."/>
            <person name="Morel C."/>
            <person name="Doignon F."/>
            <person name="Crouzet M."/>
        </authorList>
    </citation>
    <scope>NUCLEOTIDE SEQUENCE [GENOMIC DNA]</scope>
</reference>
<reference key="2">
    <citation type="journal article" date="1996" name="Yeast">
        <title>The sequence of a 30 kb fragment on the left arm of chromosome XV from Saccharomyces cerevisiae reveals 15 open reading frames, five of which correspond to previously identified genes.</title>
        <authorList>
            <person name="Sterky F."/>
            <person name="Holmberg A."/>
            <person name="Pettersson B."/>
            <person name="Uhlen M."/>
        </authorList>
    </citation>
    <scope>NUCLEOTIDE SEQUENCE [GENOMIC DNA]</scope>
</reference>
<reference key="3">
    <citation type="journal article" date="1997" name="Nature">
        <title>The nucleotide sequence of Saccharomyces cerevisiae chromosome XV.</title>
        <authorList>
            <person name="Dujon B."/>
            <person name="Albermann K."/>
            <person name="Aldea M."/>
            <person name="Alexandraki D."/>
            <person name="Ansorge W."/>
            <person name="Arino J."/>
            <person name="Benes V."/>
            <person name="Bohn C."/>
            <person name="Bolotin-Fukuhara M."/>
            <person name="Bordonne R."/>
            <person name="Boyer J."/>
            <person name="Camasses A."/>
            <person name="Casamayor A."/>
            <person name="Casas C."/>
            <person name="Cheret G."/>
            <person name="Cziepluch C."/>
            <person name="Daignan-Fornier B."/>
            <person name="Dang V.-D."/>
            <person name="de Haan M."/>
            <person name="Delius H."/>
            <person name="Durand P."/>
            <person name="Fairhead C."/>
            <person name="Feldmann H."/>
            <person name="Gaillon L."/>
            <person name="Galisson F."/>
            <person name="Gamo F.-J."/>
            <person name="Gancedo C."/>
            <person name="Goffeau A."/>
            <person name="Goulding S.E."/>
            <person name="Grivell L.A."/>
            <person name="Habbig B."/>
            <person name="Hand N.J."/>
            <person name="Hani J."/>
            <person name="Hattenhorst U."/>
            <person name="Hebling U."/>
            <person name="Hernando Y."/>
            <person name="Herrero E."/>
            <person name="Heumann K."/>
            <person name="Hiesel R."/>
            <person name="Hilger F."/>
            <person name="Hofmann B."/>
            <person name="Hollenberg C.P."/>
            <person name="Hughes B."/>
            <person name="Jauniaux J.-C."/>
            <person name="Kalogeropoulos A."/>
            <person name="Katsoulou C."/>
            <person name="Kordes E."/>
            <person name="Lafuente M.J."/>
            <person name="Landt O."/>
            <person name="Louis E.J."/>
            <person name="Maarse A.C."/>
            <person name="Madania A."/>
            <person name="Mannhaupt G."/>
            <person name="Marck C."/>
            <person name="Martin R.P."/>
            <person name="Mewes H.-W."/>
            <person name="Michaux G."/>
            <person name="Paces V."/>
            <person name="Parle-McDermott A.G."/>
            <person name="Pearson B.M."/>
            <person name="Perrin A."/>
            <person name="Pettersson B."/>
            <person name="Poch O."/>
            <person name="Pohl T.M."/>
            <person name="Poirey R."/>
            <person name="Portetelle D."/>
            <person name="Pujol A."/>
            <person name="Purnelle B."/>
            <person name="Ramezani Rad M."/>
            <person name="Rechmann S."/>
            <person name="Schwager C."/>
            <person name="Schweizer M."/>
            <person name="Sor F."/>
            <person name="Sterky F."/>
            <person name="Tarassov I.A."/>
            <person name="Teodoru C."/>
            <person name="Tettelin H."/>
            <person name="Thierry A."/>
            <person name="Tobiasch E."/>
            <person name="Tzermia M."/>
            <person name="Uhlen M."/>
            <person name="Unseld M."/>
            <person name="Valens M."/>
            <person name="Vandenbol M."/>
            <person name="Vetter I."/>
            <person name="Vlcek C."/>
            <person name="Voet M."/>
            <person name="Volckaert G."/>
            <person name="Voss H."/>
            <person name="Wambutt R."/>
            <person name="Wedler H."/>
            <person name="Wiemann S."/>
            <person name="Winsor B."/>
            <person name="Wolfe K.H."/>
            <person name="Zollner A."/>
            <person name="Zumstein E."/>
            <person name="Kleine K."/>
        </authorList>
    </citation>
    <scope>NUCLEOTIDE SEQUENCE [LARGE SCALE GENOMIC DNA]</scope>
    <source>
        <strain>ATCC 204508 / S288c</strain>
    </source>
</reference>
<reference key="4">
    <citation type="journal article" date="2014" name="G3 (Bethesda)">
        <title>The reference genome sequence of Saccharomyces cerevisiae: Then and now.</title>
        <authorList>
            <person name="Engel S.R."/>
            <person name="Dietrich F.S."/>
            <person name="Fisk D.G."/>
            <person name="Binkley G."/>
            <person name="Balakrishnan R."/>
            <person name="Costanzo M.C."/>
            <person name="Dwight S.S."/>
            <person name="Hitz B.C."/>
            <person name="Karra K."/>
            <person name="Nash R.S."/>
            <person name="Weng S."/>
            <person name="Wong E.D."/>
            <person name="Lloyd P."/>
            <person name="Skrzypek M.S."/>
            <person name="Miyasato S.R."/>
            <person name="Simison M."/>
            <person name="Cherry J.M."/>
        </authorList>
    </citation>
    <scope>GENOME REANNOTATION</scope>
    <source>
        <strain>ATCC 204508 / S288c</strain>
    </source>
</reference>
<reference key="5">
    <citation type="journal article" date="1998" name="Mol. Gen. Genet.">
        <title>A screen for upstream components of the yeast protein kinase C signal transduction pathway identifies the product of the SLG1 gene.</title>
        <authorList>
            <person name="Jacoby J.J."/>
            <person name="Nilius S.M."/>
            <person name="Heinisch J.J."/>
        </authorList>
    </citation>
    <scope>IDENTIFICATION</scope>
</reference>
<reference key="6">
    <citation type="journal article" date="1999" name="Genetics">
        <title>Characterization of the Wsc1 protein, a putative receptor in the stress response of Saccharomyces cerevisiae.</title>
        <authorList>
            <person name="Lodder A.L."/>
            <person name="Lee T.K."/>
            <person name="Ballester R."/>
        </authorList>
    </citation>
    <scope>FUNCTION</scope>
    <scope>SUBCELLULAR LOCATION</scope>
    <scope>GLYCOSYLATION</scope>
    <scope>PHOSPHORYLATION</scope>
</reference>
<reference key="7">
    <citation type="journal article" date="2000" name="Mol. Gen. Genet.">
        <title>SLG1 plays a role during G1 in the decision to enter or exit the cell cycle.</title>
        <authorList>
            <person name="Ivanovska I."/>
            <person name="Rose M.D."/>
        </authorList>
    </citation>
    <scope>FUNCTION</scope>
</reference>
<reference key="8">
    <citation type="journal article" date="2001" name="Mol. Cell. Biol.">
        <title>Wsc1 and Mid2 are cell surface sensors for cell wall integrity signaling that act through Rom2, a guanine nucleotide exchange factor for Rho1.</title>
        <authorList>
            <person name="Philip B."/>
            <person name="Levin D.E."/>
        </authorList>
    </citation>
    <scope>FUNCTION</scope>
</reference>
<reference key="9">
    <citation type="journal article" date="2002" name="Genetics">
        <title>Dissection of upstream regulatory components of the Rho1p effector, 1,3-beta-glucan synthase, in Saccharomyces cerevisiae.</title>
        <authorList>
            <person name="Sekiya-Kawasaki M."/>
            <person name="Abe M."/>
            <person name="Saka A."/>
            <person name="Watanabe D."/>
            <person name="Kono K."/>
            <person name="Minemura-Asakawa M."/>
            <person name="Ishihara S."/>
            <person name="Watanabe T."/>
            <person name="Ohya Y."/>
        </authorList>
    </citation>
    <scope>FUNCTION</scope>
    <scope>DISRUPTION PHENOTYPE</scope>
</reference>
<reference key="10">
    <citation type="journal article" date="2003" name="Nature">
        <title>Global analysis of protein expression in yeast.</title>
        <authorList>
            <person name="Ghaemmaghami S."/>
            <person name="Huh W.-K."/>
            <person name="Bower K."/>
            <person name="Howson R.W."/>
            <person name="Belle A."/>
            <person name="Dephoure N."/>
            <person name="O'Shea E.K."/>
            <person name="Weissman J.S."/>
        </authorList>
    </citation>
    <scope>LEVEL OF PROTEIN EXPRESSION [LARGE SCALE ANALYSIS]</scope>
</reference>
<reference key="11">
    <citation type="journal article" date="2004" name="Microbiology">
        <title>Mutational analysis of the cytoplasmic domain of the Wsc1 cell wall stress sensor.</title>
        <authorList>
            <person name="Vay H.A."/>
            <person name="Philip B."/>
            <person name="Levin D.E."/>
        </authorList>
    </citation>
    <scope>PHOSPHORYLATION</scope>
    <scope>MUTAGENESIS OF SER-319; SER-320; SER-322 AND SER-323</scope>
</reference>
<reference key="12">
    <citation type="journal article" date="2004" name="Yeast">
        <title>The cell wall sensor Wsc1p is involved in reorganization of actin cytoskeleton in response to hypo-osmotic shock in Saccharomyces cerevisiae.</title>
        <authorList>
            <person name="Gualtieri T."/>
            <person name="Ragni E."/>
            <person name="Mizzi L."/>
            <person name="Fascio U."/>
            <person name="Popolo L."/>
        </authorList>
    </citation>
    <scope>FUNCTION</scope>
</reference>
<reference key="13">
    <citation type="journal article" date="2005" name="Mol. Cell. Proteomics">
        <title>Quantitative phosphoproteomics applied to the yeast pheromone signaling pathway.</title>
        <authorList>
            <person name="Gruhler A."/>
            <person name="Olsen J.V."/>
            <person name="Mohammed S."/>
            <person name="Mortensen P."/>
            <person name="Faergeman N.J."/>
            <person name="Mann M."/>
            <person name="Jensen O.N."/>
        </authorList>
    </citation>
    <scope>PHOSPHORYLATION [LARGE SCALE ANALYSIS] AT SER-353</scope>
    <scope>IDENTIFICATION BY MASS SPECTROMETRY [LARGE SCALE ANALYSIS]</scope>
    <source>
        <strain>YAL6B</strain>
    </source>
</reference>
<reference key="14">
    <citation type="journal article" date="2006" name="J. Biol. Chem.">
        <title>Signaling alkaline pH stress in the yeast Saccharomyces cerevisiae through the Wsc1 cell surface sensor and the Slt2 MAPK pathway.</title>
        <authorList>
            <person name="Serrano R."/>
            <person name="Martin H."/>
            <person name="Casamayor A."/>
            <person name="Arino J."/>
        </authorList>
    </citation>
    <scope>NULL MUTANT</scope>
    <scope>DELETION MUTANTS</scope>
    <scope>MUTAGENESIS OF TYR-303</scope>
</reference>
<reference key="15">
    <citation type="journal article" date="2007" name="J. Proteome Res.">
        <title>Large-scale phosphorylation analysis of alpha-factor-arrested Saccharomyces cerevisiae.</title>
        <authorList>
            <person name="Li X."/>
            <person name="Gerber S.A."/>
            <person name="Rudner A.D."/>
            <person name="Beausoleil S.A."/>
            <person name="Haas W."/>
            <person name="Villen J."/>
            <person name="Elias J.E."/>
            <person name="Gygi S.P."/>
        </authorList>
    </citation>
    <scope>PHOSPHORYLATION [LARGE SCALE ANALYSIS] AT SER-353</scope>
    <scope>IDENTIFICATION BY MASS SPECTROMETRY [LARGE SCALE ANALYSIS]</scope>
    <source>
        <strain>ADR376</strain>
    </source>
</reference>
<reference key="16">
    <citation type="journal article" date="2008" name="Mol. Cell. Proteomics">
        <title>A multidimensional chromatography technology for in-depth phosphoproteome analysis.</title>
        <authorList>
            <person name="Albuquerque C.P."/>
            <person name="Smolka M.B."/>
            <person name="Payne S.H."/>
            <person name="Bafna V."/>
            <person name="Eng J."/>
            <person name="Zhou H."/>
        </authorList>
    </citation>
    <scope>PHOSPHORYLATION [LARGE SCALE ANALYSIS] AT SER-331</scope>
    <scope>IDENTIFICATION BY MASS SPECTROMETRY [LARGE SCALE ANALYSIS]</scope>
</reference>
<reference key="17">
    <citation type="journal article" date="2009" name="Science">
        <title>Global analysis of Cdk1 substrate phosphorylation sites provides insights into evolution.</title>
        <authorList>
            <person name="Holt L.J."/>
            <person name="Tuch B.B."/>
            <person name="Villen J."/>
            <person name="Johnson A.D."/>
            <person name="Gygi S.P."/>
            <person name="Morgan D.O."/>
        </authorList>
    </citation>
    <scope>PHOSPHORYLATION [LARGE SCALE ANALYSIS] AT SER-353</scope>
    <scope>IDENTIFICATION BY MASS SPECTROMETRY [LARGE SCALE ANALYSIS]</scope>
</reference>
<sequence length="378" mass="39270">MRPNKTSLLLALLSILSQANAYEYVNCFSSLPSDFSKADSYNWQSSSHCNSECSAKGASYFALYNHSECYCGDTNPSGSESTSSSCNTYCFGYSSEMCGGEDAYSVYQLDSDTNSNSISSSDSSTESTSASSSTTSSTTSSTTSTTSSTTSSTTSSMASSSTVQNSPESTQAAASISTSQSSSTVTSESSLTSDTLATSSTSSQSQDATSIIYSTTFHTEGGSTIFVTNTITASAQNSGSATGTAGSDSTSGSKTHKKKANVGAIVGGVVGGVVGAVAIALCILLIVRHINMKREQDRMEKEYQEAIKPVEYPDKLYASSFSSNHGPSSGSFEEEHTKGQTDINPFDDSRRISNGTFINGGPGGKNNVLTVVNPDEAD</sequence>
<comment type="function">
    <text evidence="4 5 6 7 10">Plays a role during G1 to regulate entering or exiting the cell cycle. Involved in stress responses. Has a role in cell wall integrity signaling. Activates ROM1 or ROM2 catalyzed guanine nucleotide exchange toward RHO1. Important regulator of the actin cytoskeleton rearrangements in conditions of cell wall expansion and membrane stretching. Specifically required for the actin reorganization induced by hypo-osmotic shock. Multicopy suppressor of 1,3-beta-glucan synthase (GS). Activates GS upstream of RHO1. Acts positively on the PKC1-MAPK pathway. Activates transiently SLT2 during alkaline stress, which leads to an increase in the expression of several specific genes.</text>
</comment>
<comment type="subcellular location">
    <subcellularLocation>
        <location evidence="4">Cell membrane</location>
        <topology evidence="4">Single-pass type I membrane protein</topology>
    </subcellularLocation>
</comment>
<comment type="PTM">
    <text evidence="4 9">Glycosylated. Phosphorylated. Phosphorylation serves a negative regulatory role.</text>
</comment>
<comment type="disruption phenotype">
    <text evidence="7">Lack of SLG1 leads to a significant defect of 1,3-beta-glucan synthesis and confers sensitivity to caffeine, SDS, Calcofluor and alkaline pH stress. Deletion of residues 21-256 results in non-functional protein, removal of residues 21-110 yields a protein still able to confer some tolerance to alkaline stress, and deletion of residues 116-256 has no effect on the function.</text>
</comment>
<comment type="miscellaneous">
    <text evidence="8">Present with 664 molecules/cell in log phase SD medium.</text>
</comment>
<proteinExistence type="evidence at protein level"/>
<accession>P54867</accession>
<accession>D6W274</accession>
<keyword id="KW-0002">3D-structure</keyword>
<keyword id="KW-0131">Cell cycle</keyword>
<keyword id="KW-1003">Cell membrane</keyword>
<keyword id="KW-0961">Cell wall biogenesis/degradation</keyword>
<keyword id="KW-0325">Glycoprotein</keyword>
<keyword id="KW-0472">Membrane</keyword>
<keyword id="KW-0597">Phosphoprotein</keyword>
<keyword id="KW-1185">Reference proteome</keyword>
<keyword id="KW-0732">Signal</keyword>
<keyword id="KW-0346">Stress response</keyword>
<keyword id="KW-0812">Transmembrane</keyword>
<keyword id="KW-1133">Transmembrane helix</keyword>
<gene>
    <name type="primary">SLG1</name>
    <name type="synonym">WSC1</name>
    <name type="ordered locus">YOR008C</name>
    <name type="ORF">UNF378</name>
</gene>
<name>SLG1_YEAST</name>
<feature type="signal peptide" evidence="1">
    <location>
        <begin position="1"/>
        <end position="21"/>
    </location>
</feature>
<feature type="chain" id="PRO_0000041483" description="Protein SLG1">
    <location>
        <begin position="22"/>
        <end position="378"/>
    </location>
</feature>
<feature type="topological domain" description="Extracellular" evidence="1">
    <location>
        <begin position="22"/>
        <end position="264"/>
    </location>
</feature>
<feature type="transmembrane region" description="Helical" evidence="1">
    <location>
        <begin position="265"/>
        <end position="285"/>
    </location>
</feature>
<feature type="topological domain" description="Cytoplasmic" evidence="1">
    <location>
        <begin position="286"/>
        <end position="378"/>
    </location>
</feature>
<feature type="domain" description="WSC" evidence="2">
    <location>
        <begin position="22"/>
        <end position="110"/>
    </location>
</feature>
<feature type="region of interest" description="Disordered" evidence="3">
    <location>
        <begin position="115"/>
        <end position="201"/>
    </location>
</feature>
<feature type="region of interest" description="Disordered" evidence="3">
    <location>
        <begin position="236"/>
        <end position="256"/>
    </location>
</feature>
<feature type="region of interest" description="Disordered" evidence="3">
    <location>
        <begin position="318"/>
        <end position="378"/>
    </location>
</feature>
<feature type="compositionally biased region" description="Low complexity" evidence="3">
    <location>
        <begin position="236"/>
        <end position="253"/>
    </location>
</feature>
<feature type="compositionally biased region" description="Low complexity" evidence="3">
    <location>
        <begin position="319"/>
        <end position="331"/>
    </location>
</feature>
<feature type="modified residue" description="Phosphoserine" evidence="14">
    <location>
        <position position="331"/>
    </location>
</feature>
<feature type="modified residue" description="Phosphoserine" evidence="12 13 15">
    <location>
        <position position="353"/>
    </location>
</feature>
<feature type="glycosylation site" description="N-linked (GlcNAc...) asparagine" evidence="1">
    <location>
        <position position="65"/>
    </location>
</feature>
<feature type="mutagenesis site" description="Sensitive to alkali. Fails to restore normal levels of SLT2 phosphorylation upon alkaline stress." evidence="11">
    <original>Y</original>
    <variation>A</variation>
    <location>
        <position position="303"/>
    </location>
</feature>
<feature type="mutagenesis site" description="No phosphorylation; when associated with A-320." evidence="9">
    <original>S</original>
    <variation>A</variation>
    <location>
        <position position="319"/>
    </location>
</feature>
<feature type="mutagenesis site" description="No phosphorylation; when associated with A-319." evidence="9">
    <original>S</original>
    <variation>A</variation>
    <location>
        <position position="320"/>
    </location>
</feature>
<feature type="mutagenesis site" description="No phosphorylation; when associated with A-323." evidence="9">
    <original>S</original>
    <variation>A</variation>
    <location>
        <position position="322"/>
    </location>
</feature>
<feature type="mutagenesis site" description="No phosphorylation; when associated with A-322." evidence="9">
    <original>S</original>
    <variation>A</variation>
    <location>
        <position position="323"/>
    </location>
</feature>
<feature type="strand" evidence="16">
    <location>
        <begin position="22"/>
        <end position="30"/>
    </location>
</feature>
<feature type="strand" evidence="16">
    <location>
        <begin position="36"/>
        <end position="40"/>
    </location>
</feature>
<feature type="helix" evidence="16">
    <location>
        <begin position="46"/>
        <end position="55"/>
    </location>
</feature>
<feature type="strand" evidence="16">
    <location>
        <begin position="59"/>
        <end position="64"/>
    </location>
</feature>
<feature type="turn" evidence="16">
    <location>
        <begin position="65"/>
        <end position="67"/>
    </location>
</feature>
<feature type="strand" evidence="16">
    <location>
        <begin position="68"/>
        <end position="74"/>
    </location>
</feature>
<feature type="helix" evidence="16">
    <location>
        <begin position="76"/>
        <end position="78"/>
    </location>
</feature>
<feature type="strand" evidence="16">
    <location>
        <begin position="93"/>
        <end position="97"/>
    </location>
</feature>
<feature type="strand" evidence="16">
    <location>
        <begin position="103"/>
        <end position="109"/>
    </location>
</feature>
<protein>
    <recommendedName>
        <fullName>Protein SLG1</fullName>
    </recommendedName>
    <alternativeName>
        <fullName>Cell wall integrity and stress response component 1</fullName>
    </alternativeName>
    <alternativeName>
        <fullName>Synthetic lethal with GAP protein 1</fullName>
    </alternativeName>
</protein>
<evidence type="ECO:0000255" key="1"/>
<evidence type="ECO:0000255" key="2">
    <source>
        <dbReference type="PROSITE-ProRule" id="PRU00558"/>
    </source>
</evidence>
<evidence type="ECO:0000256" key="3">
    <source>
        <dbReference type="SAM" id="MobiDB-lite"/>
    </source>
</evidence>
<evidence type="ECO:0000269" key="4">
    <source>
    </source>
</evidence>
<evidence type="ECO:0000269" key="5">
    <source>
    </source>
</evidence>
<evidence type="ECO:0000269" key="6">
    <source>
    </source>
</evidence>
<evidence type="ECO:0000269" key="7">
    <source>
    </source>
</evidence>
<evidence type="ECO:0000269" key="8">
    <source>
    </source>
</evidence>
<evidence type="ECO:0000269" key="9">
    <source>
    </source>
</evidence>
<evidence type="ECO:0000269" key="10">
    <source>
    </source>
</evidence>
<evidence type="ECO:0000269" key="11">
    <source>
    </source>
</evidence>
<evidence type="ECO:0007744" key="12">
    <source>
    </source>
</evidence>
<evidence type="ECO:0007744" key="13">
    <source>
    </source>
</evidence>
<evidence type="ECO:0007744" key="14">
    <source>
    </source>
</evidence>
<evidence type="ECO:0007744" key="15">
    <source>
    </source>
</evidence>
<evidence type="ECO:0007829" key="16">
    <source>
        <dbReference type="PDB" id="7PZ2"/>
    </source>
</evidence>
<dbReference type="EMBL" id="U39481">
    <property type="protein sequence ID" value="AAA85862.1"/>
    <property type="molecule type" value="Genomic_DNA"/>
</dbReference>
<dbReference type="EMBL" id="U43491">
    <property type="protein sequence ID" value="AAC49488.1"/>
    <property type="molecule type" value="Genomic_DNA"/>
</dbReference>
<dbReference type="EMBL" id="Z74916">
    <property type="protein sequence ID" value="CAA99196.1"/>
    <property type="molecule type" value="Genomic_DNA"/>
</dbReference>
<dbReference type="EMBL" id="BK006948">
    <property type="protein sequence ID" value="DAA10790.1"/>
    <property type="molecule type" value="Genomic_DNA"/>
</dbReference>
<dbReference type="PIR" id="S61992">
    <property type="entry name" value="S61992"/>
</dbReference>
<dbReference type="RefSeq" id="NP_014650.1">
    <property type="nucleotide sequence ID" value="NM_001183427.1"/>
</dbReference>
<dbReference type="PDB" id="7PZ2">
    <property type="method" value="X-ray"/>
    <property type="resolution" value="1.58 A"/>
    <property type="chains" value="A/B=22-118"/>
</dbReference>
<dbReference type="PDBsum" id="7PZ2"/>
<dbReference type="SMR" id="P54867"/>
<dbReference type="BioGRID" id="34412">
    <property type="interactions" value="231"/>
</dbReference>
<dbReference type="DIP" id="DIP-4196N"/>
<dbReference type="FunCoup" id="P54867">
    <property type="interactions" value="195"/>
</dbReference>
<dbReference type="IntAct" id="P54867">
    <property type="interactions" value="2"/>
</dbReference>
<dbReference type="STRING" id="4932.YOR008C"/>
<dbReference type="TCDB" id="9.B.454.1.1">
    <property type="family name" value="the transmembrane mechanosensor, slg1 (slg1) family"/>
</dbReference>
<dbReference type="GlyCosmos" id="P54867">
    <property type="glycosylation" value="1 site, No reported glycans"/>
</dbReference>
<dbReference type="GlyGen" id="P54867">
    <property type="glycosylation" value="1 site"/>
</dbReference>
<dbReference type="iPTMnet" id="P54867"/>
<dbReference type="PaxDb" id="4932-YOR008C"/>
<dbReference type="PeptideAtlas" id="P54867"/>
<dbReference type="EnsemblFungi" id="YOR008C_mRNA">
    <property type="protein sequence ID" value="YOR008C"/>
    <property type="gene ID" value="YOR008C"/>
</dbReference>
<dbReference type="GeneID" id="854170"/>
<dbReference type="KEGG" id="sce:YOR008C"/>
<dbReference type="AGR" id="SGD:S000005534"/>
<dbReference type="SGD" id="S000005534">
    <property type="gene designation" value="SLG1"/>
</dbReference>
<dbReference type="VEuPathDB" id="FungiDB:YOR008C"/>
<dbReference type="eggNOG" id="KOG4157">
    <property type="taxonomic scope" value="Eukaryota"/>
</dbReference>
<dbReference type="HOGENOM" id="CLU_024893_1_1_1"/>
<dbReference type="InParanoid" id="P54867"/>
<dbReference type="OMA" id="HINMKRE"/>
<dbReference type="OrthoDB" id="5985073at2759"/>
<dbReference type="BioCyc" id="YEAST:G3O-33558-MONOMER"/>
<dbReference type="BioGRID-ORCS" id="854170">
    <property type="hits" value="2 hits in 10 CRISPR screens"/>
</dbReference>
<dbReference type="PRO" id="PR:P54867"/>
<dbReference type="Proteomes" id="UP000002311">
    <property type="component" value="Chromosome XV"/>
</dbReference>
<dbReference type="RNAct" id="P54867">
    <property type="molecule type" value="protein"/>
</dbReference>
<dbReference type="GO" id="GO:0005933">
    <property type="term" value="C:cellular bud"/>
    <property type="evidence" value="ECO:0000314"/>
    <property type="project" value="SGD"/>
</dbReference>
<dbReference type="GO" id="GO:0005935">
    <property type="term" value="C:cellular bud neck"/>
    <property type="evidence" value="ECO:0000314"/>
    <property type="project" value="SGD"/>
</dbReference>
<dbReference type="GO" id="GO:0005783">
    <property type="term" value="C:endoplasmic reticulum"/>
    <property type="evidence" value="ECO:0007005"/>
    <property type="project" value="SGD"/>
</dbReference>
<dbReference type="GO" id="GO:0000324">
    <property type="term" value="C:fungal-type vacuole"/>
    <property type="evidence" value="ECO:0007005"/>
    <property type="project" value="SGD"/>
</dbReference>
<dbReference type="GO" id="GO:0043332">
    <property type="term" value="C:mating projection tip"/>
    <property type="evidence" value="ECO:0007005"/>
    <property type="project" value="SGD"/>
</dbReference>
<dbReference type="GO" id="GO:0005886">
    <property type="term" value="C:plasma membrane"/>
    <property type="evidence" value="ECO:0000314"/>
    <property type="project" value="SGD"/>
</dbReference>
<dbReference type="GO" id="GO:0004888">
    <property type="term" value="F:transmembrane signaling receptor activity"/>
    <property type="evidence" value="ECO:0000316"/>
    <property type="project" value="SGD"/>
</dbReference>
<dbReference type="GO" id="GO:0030036">
    <property type="term" value="P:actin cytoskeleton organization"/>
    <property type="evidence" value="ECO:0000315"/>
    <property type="project" value="SGD"/>
</dbReference>
<dbReference type="GO" id="GO:0006897">
    <property type="term" value="P:endocytosis"/>
    <property type="evidence" value="ECO:0000315"/>
    <property type="project" value="SGD"/>
</dbReference>
<dbReference type="GO" id="GO:0030010">
    <property type="term" value="P:establishment of cell polarity"/>
    <property type="evidence" value="ECO:0000315"/>
    <property type="project" value="SGD"/>
</dbReference>
<dbReference type="GO" id="GO:0031505">
    <property type="term" value="P:fungal-type cell wall organization"/>
    <property type="evidence" value="ECO:0000315"/>
    <property type="project" value="SGD"/>
</dbReference>
<dbReference type="GO" id="GO:0000425">
    <property type="term" value="P:pexophagy"/>
    <property type="evidence" value="ECO:0000315"/>
    <property type="project" value="SGD"/>
</dbReference>
<dbReference type="GO" id="GO:0045807">
    <property type="term" value="P:positive regulation of endocytosis"/>
    <property type="evidence" value="ECO:0000315"/>
    <property type="project" value="SGD"/>
</dbReference>
<dbReference type="GO" id="GO:0009408">
    <property type="term" value="P:response to heat"/>
    <property type="evidence" value="ECO:0000315"/>
    <property type="project" value="SGD"/>
</dbReference>
<dbReference type="GO" id="GO:0006970">
    <property type="term" value="P:response to osmotic stress"/>
    <property type="evidence" value="ECO:0000316"/>
    <property type="project" value="SGD"/>
</dbReference>
<dbReference type="GO" id="GO:0007266">
    <property type="term" value="P:Rho protein signal transduction"/>
    <property type="evidence" value="ECO:0000315"/>
    <property type="project" value="SGD"/>
</dbReference>
<dbReference type="GO" id="GO:0007165">
    <property type="term" value="P:signal transduction"/>
    <property type="evidence" value="ECO:0000318"/>
    <property type="project" value="GO_Central"/>
</dbReference>
<dbReference type="InterPro" id="IPR051836">
    <property type="entry name" value="Kremen_rcpt"/>
</dbReference>
<dbReference type="InterPro" id="IPR002889">
    <property type="entry name" value="WSC_carb-bd"/>
</dbReference>
<dbReference type="PANTHER" id="PTHR24269">
    <property type="entry name" value="KREMEN PROTEIN"/>
    <property type="match status" value="1"/>
</dbReference>
<dbReference type="PANTHER" id="PTHR24269:SF16">
    <property type="entry name" value="PROTEIN SLG1"/>
    <property type="match status" value="1"/>
</dbReference>
<dbReference type="Pfam" id="PF01822">
    <property type="entry name" value="WSC"/>
    <property type="match status" value="1"/>
</dbReference>
<dbReference type="SMART" id="SM00321">
    <property type="entry name" value="WSC"/>
    <property type="match status" value="1"/>
</dbReference>
<dbReference type="PROSITE" id="PS51212">
    <property type="entry name" value="WSC"/>
    <property type="match status" value="1"/>
</dbReference>
<organism>
    <name type="scientific">Saccharomyces cerevisiae (strain ATCC 204508 / S288c)</name>
    <name type="common">Baker's yeast</name>
    <dbReference type="NCBI Taxonomy" id="559292"/>
    <lineage>
        <taxon>Eukaryota</taxon>
        <taxon>Fungi</taxon>
        <taxon>Dikarya</taxon>
        <taxon>Ascomycota</taxon>
        <taxon>Saccharomycotina</taxon>
        <taxon>Saccharomycetes</taxon>
        <taxon>Saccharomycetales</taxon>
        <taxon>Saccharomycetaceae</taxon>
        <taxon>Saccharomyces</taxon>
    </lineage>
</organism>